<accession>A5F3I5</accession>
<accession>C3M4H9</accession>
<organism>
    <name type="scientific">Vibrio cholerae serotype O1 (strain ATCC 39541 / Classical Ogawa 395 / O395)</name>
    <dbReference type="NCBI Taxonomy" id="345073"/>
    <lineage>
        <taxon>Bacteria</taxon>
        <taxon>Pseudomonadati</taxon>
        <taxon>Pseudomonadota</taxon>
        <taxon>Gammaproteobacteria</taxon>
        <taxon>Vibrionales</taxon>
        <taxon>Vibrionaceae</taxon>
        <taxon>Vibrio</taxon>
    </lineage>
</organism>
<gene>
    <name evidence="1" type="primary">cysI</name>
    <name type="ordered locus">VC0395_A2796</name>
    <name type="ordered locus">VC395_0429</name>
</gene>
<comment type="function">
    <text evidence="1">Component of the sulfite reductase complex that catalyzes the 6-electron reduction of sulfite to sulfide. This is one of several activities required for the biosynthesis of L-cysteine from sulfate.</text>
</comment>
<comment type="catalytic activity">
    <reaction evidence="1">
        <text>hydrogen sulfide + 3 NADP(+) + 3 H2O = sulfite + 3 NADPH + 4 H(+)</text>
        <dbReference type="Rhea" id="RHEA:13801"/>
        <dbReference type="ChEBI" id="CHEBI:15377"/>
        <dbReference type="ChEBI" id="CHEBI:15378"/>
        <dbReference type="ChEBI" id="CHEBI:17359"/>
        <dbReference type="ChEBI" id="CHEBI:29919"/>
        <dbReference type="ChEBI" id="CHEBI:57783"/>
        <dbReference type="ChEBI" id="CHEBI:58349"/>
        <dbReference type="EC" id="1.8.1.2"/>
    </reaction>
</comment>
<comment type="cofactor">
    <cofactor evidence="1">
        <name>siroheme</name>
        <dbReference type="ChEBI" id="CHEBI:60052"/>
    </cofactor>
    <text evidence="1">Binds 1 siroheme per subunit.</text>
</comment>
<comment type="cofactor">
    <cofactor evidence="1">
        <name>[4Fe-4S] cluster</name>
        <dbReference type="ChEBI" id="CHEBI:49883"/>
    </cofactor>
    <text evidence="1">Binds 1 [4Fe-4S] cluster per subunit.</text>
</comment>
<comment type="pathway">
    <text evidence="1">Sulfur metabolism; hydrogen sulfide biosynthesis; hydrogen sulfide from sulfite (NADPH route): step 1/1.</text>
</comment>
<comment type="subunit">
    <text evidence="1">Alpha(8)-beta(8). The alpha component is a flavoprotein, the beta component is a hemoprotein.</text>
</comment>
<comment type="similarity">
    <text evidence="1">Belongs to the nitrite and sulfite reductase 4Fe-4S domain family.</text>
</comment>
<keyword id="KW-0004">4Fe-4S</keyword>
<keyword id="KW-0028">Amino-acid biosynthesis</keyword>
<keyword id="KW-0198">Cysteine biosynthesis</keyword>
<keyword id="KW-0349">Heme</keyword>
<keyword id="KW-0408">Iron</keyword>
<keyword id="KW-0411">Iron-sulfur</keyword>
<keyword id="KW-0479">Metal-binding</keyword>
<keyword id="KW-0521">NADP</keyword>
<keyword id="KW-0560">Oxidoreductase</keyword>
<proteinExistence type="inferred from homology"/>
<sequence length="577" mass="64371">MSANQNPSVQEVLGEVLGPWSDNERLKRESHFLRGTIEQDLQDRITGGFTADNFQLIRFHGMYQQDDRDIRAERSKQKLEPLHNVMLRARMPGGIITPHQWLAIDKFATEHTLYGSIRLTTRQTFQFHGVLKPNIKLMHQTLNSIGIDSIATAGDVNRNVLCTSNPVESQLHLQAYEWAKKISEHLLPKTRAYAEIWLDGEKIEGPDEEPILGSNYLPRKFKTTVVIPPHNDVDVHANDLNFVAIGENGQLIGFNVLVGGGLAMTHGDTSTYPRRADDFGFIPLEKTLEVAAAVVSTQRDWGNRSNRKNAKTKYTLDRVGVEVFKAEVEKRAGITFAPSRAYEFTSRGDRIGWVEGIDGKHHLTLFIENGRILDFPGKPLKTGVAEIAKVHQGDFRMTANQNLIVAGVPADQKQQIEQLARSHGLIDDGVSEQRINSMACVAFPTCPLAMAEAERFLPSFVTEVEGILAKHALPKEENIILRVTGCPNGCGRAMLAEIGLVGKAPGRYNLHLGGNRNGTRIPKMYKENITDTQILQEIDELVGRWASERLDGEGFGDFTIRAGIIEEVIISKRDFYA</sequence>
<evidence type="ECO:0000255" key="1">
    <source>
        <dbReference type="HAMAP-Rule" id="MF_01540"/>
    </source>
</evidence>
<feature type="chain" id="PRO_1000073552" description="Sulfite reductase [NADPH] hemoprotein beta-component">
    <location>
        <begin position="1"/>
        <end position="577"/>
    </location>
</feature>
<feature type="binding site" evidence="1">
    <location>
        <position position="440"/>
    </location>
    <ligand>
        <name>[4Fe-4S] cluster</name>
        <dbReference type="ChEBI" id="CHEBI:49883"/>
    </ligand>
</feature>
<feature type="binding site" evidence="1">
    <location>
        <position position="446"/>
    </location>
    <ligand>
        <name>[4Fe-4S] cluster</name>
        <dbReference type="ChEBI" id="CHEBI:49883"/>
    </ligand>
</feature>
<feature type="binding site" evidence="1">
    <location>
        <position position="486"/>
    </location>
    <ligand>
        <name>[4Fe-4S] cluster</name>
        <dbReference type="ChEBI" id="CHEBI:49883"/>
    </ligand>
</feature>
<feature type="binding site" evidence="1">
    <location>
        <position position="490"/>
    </location>
    <ligand>
        <name>[4Fe-4S] cluster</name>
        <dbReference type="ChEBI" id="CHEBI:49883"/>
    </ligand>
</feature>
<feature type="binding site" description="axial binding residue" evidence="1">
    <location>
        <position position="490"/>
    </location>
    <ligand>
        <name>siroheme</name>
        <dbReference type="ChEBI" id="CHEBI:60052"/>
    </ligand>
    <ligandPart>
        <name>Fe</name>
        <dbReference type="ChEBI" id="CHEBI:18248"/>
    </ligandPart>
</feature>
<protein>
    <recommendedName>
        <fullName evidence="1">Sulfite reductase [NADPH] hemoprotein beta-component</fullName>
        <shortName evidence="1">SiR-HP</shortName>
        <shortName evidence="1">SiRHP</shortName>
        <ecNumber evidence="1">1.8.1.2</ecNumber>
    </recommendedName>
</protein>
<dbReference type="EC" id="1.8.1.2" evidence="1"/>
<dbReference type="EMBL" id="CP000627">
    <property type="protein sequence ID" value="ABQ21061.1"/>
    <property type="molecule type" value="Genomic_DNA"/>
</dbReference>
<dbReference type="EMBL" id="CP001235">
    <property type="protein sequence ID" value="ACP08451.1"/>
    <property type="molecule type" value="Genomic_DNA"/>
</dbReference>
<dbReference type="RefSeq" id="WP_001275674.1">
    <property type="nucleotide sequence ID" value="NZ_JAACZH010000040.1"/>
</dbReference>
<dbReference type="SMR" id="A5F3I5"/>
<dbReference type="KEGG" id="vco:VC0395_A2796"/>
<dbReference type="KEGG" id="vcr:VC395_0429"/>
<dbReference type="PATRIC" id="fig|345073.21.peg.416"/>
<dbReference type="eggNOG" id="COG0155">
    <property type="taxonomic scope" value="Bacteria"/>
</dbReference>
<dbReference type="HOGENOM" id="CLU_001975_3_2_6"/>
<dbReference type="OrthoDB" id="3189055at2"/>
<dbReference type="UniPathway" id="UPA00140">
    <property type="reaction ID" value="UER00207"/>
</dbReference>
<dbReference type="Proteomes" id="UP000000249">
    <property type="component" value="Chromosome 2"/>
</dbReference>
<dbReference type="GO" id="GO:0009337">
    <property type="term" value="C:sulfite reductase complex (NADPH)"/>
    <property type="evidence" value="ECO:0007669"/>
    <property type="project" value="InterPro"/>
</dbReference>
<dbReference type="GO" id="GO:0051539">
    <property type="term" value="F:4 iron, 4 sulfur cluster binding"/>
    <property type="evidence" value="ECO:0007669"/>
    <property type="project" value="UniProtKB-KW"/>
</dbReference>
<dbReference type="GO" id="GO:0020037">
    <property type="term" value="F:heme binding"/>
    <property type="evidence" value="ECO:0007669"/>
    <property type="project" value="InterPro"/>
</dbReference>
<dbReference type="GO" id="GO:0046872">
    <property type="term" value="F:metal ion binding"/>
    <property type="evidence" value="ECO:0007669"/>
    <property type="project" value="UniProtKB-KW"/>
</dbReference>
<dbReference type="GO" id="GO:0050661">
    <property type="term" value="F:NADP binding"/>
    <property type="evidence" value="ECO:0007669"/>
    <property type="project" value="InterPro"/>
</dbReference>
<dbReference type="GO" id="GO:0050311">
    <property type="term" value="F:sulfite reductase (ferredoxin) activity"/>
    <property type="evidence" value="ECO:0007669"/>
    <property type="project" value="TreeGrafter"/>
</dbReference>
<dbReference type="GO" id="GO:0004783">
    <property type="term" value="F:sulfite reductase (NADPH) activity"/>
    <property type="evidence" value="ECO:0007669"/>
    <property type="project" value="UniProtKB-UniRule"/>
</dbReference>
<dbReference type="GO" id="GO:0019344">
    <property type="term" value="P:cysteine biosynthetic process"/>
    <property type="evidence" value="ECO:0007669"/>
    <property type="project" value="UniProtKB-KW"/>
</dbReference>
<dbReference type="GO" id="GO:0070814">
    <property type="term" value="P:hydrogen sulfide biosynthetic process"/>
    <property type="evidence" value="ECO:0007669"/>
    <property type="project" value="UniProtKB-UniRule"/>
</dbReference>
<dbReference type="GO" id="GO:0000103">
    <property type="term" value="P:sulfate assimilation"/>
    <property type="evidence" value="ECO:0007669"/>
    <property type="project" value="UniProtKB-UniRule"/>
</dbReference>
<dbReference type="FunFam" id="3.30.413.10:FF:000003">
    <property type="entry name" value="Sulfite reductase [NADPH] hemoprotein beta-component"/>
    <property type="match status" value="1"/>
</dbReference>
<dbReference type="FunFam" id="3.30.413.10:FF:000004">
    <property type="entry name" value="Sulfite reductase [NADPH] hemoprotein beta-component"/>
    <property type="match status" value="1"/>
</dbReference>
<dbReference type="Gene3D" id="3.30.413.10">
    <property type="entry name" value="Sulfite Reductase Hemoprotein, domain 1"/>
    <property type="match status" value="2"/>
</dbReference>
<dbReference type="HAMAP" id="MF_01540">
    <property type="entry name" value="CysI"/>
    <property type="match status" value="1"/>
</dbReference>
<dbReference type="InterPro" id="IPR011786">
    <property type="entry name" value="CysI"/>
</dbReference>
<dbReference type="InterPro" id="IPR005117">
    <property type="entry name" value="NiRdtase/SiRdtase_haem-b_fer"/>
</dbReference>
<dbReference type="InterPro" id="IPR036136">
    <property type="entry name" value="Nit/Sulf_reduc_fer-like_dom_sf"/>
</dbReference>
<dbReference type="InterPro" id="IPR006067">
    <property type="entry name" value="NO2/SO3_Rdtase_4Fe4S_dom"/>
</dbReference>
<dbReference type="InterPro" id="IPR045169">
    <property type="entry name" value="NO2/SO3_Rdtase_4Fe4S_prot"/>
</dbReference>
<dbReference type="InterPro" id="IPR045854">
    <property type="entry name" value="NO2/SO3_Rdtase_4Fe4S_sf"/>
</dbReference>
<dbReference type="InterPro" id="IPR006066">
    <property type="entry name" value="NO2/SO3_Rdtase_FeS/sirohaem_BS"/>
</dbReference>
<dbReference type="NCBIfam" id="TIGR02041">
    <property type="entry name" value="CysI"/>
    <property type="match status" value="1"/>
</dbReference>
<dbReference type="NCBIfam" id="NF010029">
    <property type="entry name" value="PRK13504.1"/>
    <property type="match status" value="1"/>
</dbReference>
<dbReference type="PANTHER" id="PTHR11493:SF47">
    <property type="entry name" value="SULFITE REDUCTASE [NADPH] SUBUNIT BETA"/>
    <property type="match status" value="1"/>
</dbReference>
<dbReference type="PANTHER" id="PTHR11493">
    <property type="entry name" value="SULFITE REDUCTASE [NADPH] SUBUNIT BETA-RELATED"/>
    <property type="match status" value="1"/>
</dbReference>
<dbReference type="Pfam" id="PF01077">
    <property type="entry name" value="NIR_SIR"/>
    <property type="match status" value="1"/>
</dbReference>
<dbReference type="Pfam" id="PF03460">
    <property type="entry name" value="NIR_SIR_ferr"/>
    <property type="match status" value="2"/>
</dbReference>
<dbReference type="PRINTS" id="PR00397">
    <property type="entry name" value="SIROHAEM"/>
</dbReference>
<dbReference type="SUPFAM" id="SSF56014">
    <property type="entry name" value="Nitrite and sulphite reductase 4Fe-4S domain-like"/>
    <property type="match status" value="2"/>
</dbReference>
<dbReference type="SUPFAM" id="SSF55124">
    <property type="entry name" value="Nitrite/Sulfite reductase N-terminal domain-like"/>
    <property type="match status" value="2"/>
</dbReference>
<dbReference type="PROSITE" id="PS00365">
    <property type="entry name" value="NIR_SIR"/>
    <property type="match status" value="1"/>
</dbReference>
<reference key="1">
    <citation type="submission" date="2007-03" db="EMBL/GenBank/DDBJ databases">
        <authorList>
            <person name="Heidelberg J."/>
        </authorList>
    </citation>
    <scope>NUCLEOTIDE SEQUENCE [LARGE SCALE GENOMIC DNA]</scope>
    <source>
        <strain>ATCC 39541 / Classical Ogawa 395 / O395</strain>
    </source>
</reference>
<reference key="2">
    <citation type="journal article" date="2008" name="PLoS ONE">
        <title>A recalibrated molecular clock and independent origins for the cholera pandemic clones.</title>
        <authorList>
            <person name="Feng L."/>
            <person name="Reeves P.R."/>
            <person name="Lan R."/>
            <person name="Ren Y."/>
            <person name="Gao C."/>
            <person name="Zhou Z."/>
            <person name="Ren Y."/>
            <person name="Cheng J."/>
            <person name="Wang W."/>
            <person name="Wang J."/>
            <person name="Qian W."/>
            <person name="Li D."/>
            <person name="Wang L."/>
        </authorList>
    </citation>
    <scope>NUCLEOTIDE SEQUENCE [LARGE SCALE GENOMIC DNA]</scope>
    <source>
        <strain>ATCC 39541 / Classical Ogawa 395 / O395</strain>
    </source>
</reference>
<name>CYSI_VIBC3</name>